<keyword id="KW-1185">Reference proteome</keyword>
<keyword id="KW-0687">Ribonucleoprotein</keyword>
<keyword id="KW-0689">Ribosomal protein</keyword>
<reference key="1">
    <citation type="journal article" date="2006" name="Nat. Biotechnol.">
        <title>Genome sequence of the ubiquitous hydrocarbon-degrading marine bacterium Alcanivorax borkumensis.</title>
        <authorList>
            <person name="Schneiker S."/>
            <person name="Martins dos Santos V.A.P."/>
            <person name="Bartels D."/>
            <person name="Bekel T."/>
            <person name="Brecht M."/>
            <person name="Buhrmester J."/>
            <person name="Chernikova T.N."/>
            <person name="Denaro R."/>
            <person name="Ferrer M."/>
            <person name="Gertler C."/>
            <person name="Goesmann A."/>
            <person name="Golyshina O.V."/>
            <person name="Kaminski F."/>
            <person name="Khachane A.N."/>
            <person name="Lang S."/>
            <person name="Linke B."/>
            <person name="McHardy A.C."/>
            <person name="Meyer F."/>
            <person name="Nechitaylo T."/>
            <person name="Puehler A."/>
            <person name="Regenhardt D."/>
            <person name="Rupp O."/>
            <person name="Sabirova J.S."/>
            <person name="Selbitschka W."/>
            <person name="Yakimov M.M."/>
            <person name="Timmis K.N."/>
            <person name="Vorhoelter F.-J."/>
            <person name="Weidner S."/>
            <person name="Kaiser O."/>
            <person name="Golyshin P.N."/>
        </authorList>
    </citation>
    <scope>NUCLEOTIDE SEQUENCE [LARGE SCALE GENOMIC DNA]</scope>
    <source>
        <strain>ATCC 700651 / DSM 11573 / NCIMB 13689 / SK2</strain>
    </source>
</reference>
<sequence length="55" mass="6370">MAGPIREKIRLVSSAGTGHFYTTTKNKRLHPEKMETKKYDPVVRKHVAYKEAKIK</sequence>
<comment type="similarity">
    <text evidence="1">Belongs to the bacterial ribosomal protein bL33 family.</text>
</comment>
<name>RL33_ALCBS</name>
<protein>
    <recommendedName>
        <fullName evidence="1">Large ribosomal subunit protein bL33</fullName>
    </recommendedName>
    <alternativeName>
        <fullName evidence="2">50S ribosomal protein L33</fullName>
    </alternativeName>
</protein>
<feature type="chain" id="PRO_0000356367" description="Large ribosomal subunit protein bL33">
    <location>
        <begin position="1"/>
        <end position="55"/>
    </location>
</feature>
<dbReference type="EMBL" id="AM286690">
    <property type="protein sequence ID" value="CAL15664.1"/>
    <property type="molecule type" value="Genomic_DNA"/>
</dbReference>
<dbReference type="RefSeq" id="WP_007151127.1">
    <property type="nucleotide sequence ID" value="NC_008260.1"/>
</dbReference>
<dbReference type="SMR" id="Q0VT56"/>
<dbReference type="STRING" id="393595.ABO_0216"/>
<dbReference type="KEGG" id="abo:ABO_0216"/>
<dbReference type="eggNOG" id="COG0267">
    <property type="taxonomic scope" value="Bacteria"/>
</dbReference>
<dbReference type="HOGENOM" id="CLU_190949_1_1_6"/>
<dbReference type="OrthoDB" id="21586at2"/>
<dbReference type="Proteomes" id="UP000008871">
    <property type="component" value="Chromosome"/>
</dbReference>
<dbReference type="GO" id="GO:0022625">
    <property type="term" value="C:cytosolic large ribosomal subunit"/>
    <property type="evidence" value="ECO:0007669"/>
    <property type="project" value="TreeGrafter"/>
</dbReference>
<dbReference type="GO" id="GO:0003735">
    <property type="term" value="F:structural constituent of ribosome"/>
    <property type="evidence" value="ECO:0007669"/>
    <property type="project" value="InterPro"/>
</dbReference>
<dbReference type="GO" id="GO:0006412">
    <property type="term" value="P:translation"/>
    <property type="evidence" value="ECO:0007669"/>
    <property type="project" value="UniProtKB-UniRule"/>
</dbReference>
<dbReference type="FunFam" id="2.20.28.120:FF:000001">
    <property type="entry name" value="50S ribosomal protein L33"/>
    <property type="match status" value="1"/>
</dbReference>
<dbReference type="Gene3D" id="2.20.28.120">
    <property type="entry name" value="Ribosomal protein L33"/>
    <property type="match status" value="1"/>
</dbReference>
<dbReference type="HAMAP" id="MF_00294">
    <property type="entry name" value="Ribosomal_bL33"/>
    <property type="match status" value="1"/>
</dbReference>
<dbReference type="InterPro" id="IPR001705">
    <property type="entry name" value="Ribosomal_bL33"/>
</dbReference>
<dbReference type="InterPro" id="IPR018264">
    <property type="entry name" value="Ribosomal_bL33_CS"/>
</dbReference>
<dbReference type="InterPro" id="IPR038584">
    <property type="entry name" value="Ribosomal_bL33_sf"/>
</dbReference>
<dbReference type="InterPro" id="IPR011332">
    <property type="entry name" value="Ribosomal_zn-bd"/>
</dbReference>
<dbReference type="NCBIfam" id="NF001860">
    <property type="entry name" value="PRK00595.1"/>
    <property type="match status" value="1"/>
</dbReference>
<dbReference type="NCBIfam" id="TIGR01023">
    <property type="entry name" value="rpmG_bact"/>
    <property type="match status" value="1"/>
</dbReference>
<dbReference type="PANTHER" id="PTHR15238">
    <property type="entry name" value="54S RIBOSOMAL PROTEIN L39, MITOCHONDRIAL"/>
    <property type="match status" value="1"/>
</dbReference>
<dbReference type="PANTHER" id="PTHR15238:SF1">
    <property type="entry name" value="LARGE RIBOSOMAL SUBUNIT PROTEIN BL33M"/>
    <property type="match status" value="1"/>
</dbReference>
<dbReference type="Pfam" id="PF00471">
    <property type="entry name" value="Ribosomal_L33"/>
    <property type="match status" value="1"/>
</dbReference>
<dbReference type="SUPFAM" id="SSF57829">
    <property type="entry name" value="Zn-binding ribosomal proteins"/>
    <property type="match status" value="1"/>
</dbReference>
<dbReference type="PROSITE" id="PS00582">
    <property type="entry name" value="RIBOSOMAL_L33"/>
    <property type="match status" value="1"/>
</dbReference>
<gene>
    <name evidence="1" type="primary">rpmG</name>
    <name type="ordered locus">ABO_0216</name>
</gene>
<proteinExistence type="inferred from homology"/>
<organism>
    <name type="scientific">Alcanivorax borkumensis (strain ATCC 700651 / DSM 11573 / NCIMB 13689 / SK2)</name>
    <dbReference type="NCBI Taxonomy" id="393595"/>
    <lineage>
        <taxon>Bacteria</taxon>
        <taxon>Pseudomonadati</taxon>
        <taxon>Pseudomonadota</taxon>
        <taxon>Gammaproteobacteria</taxon>
        <taxon>Oceanospirillales</taxon>
        <taxon>Alcanivoracaceae</taxon>
        <taxon>Alcanivorax</taxon>
    </lineage>
</organism>
<accession>Q0VT56</accession>
<evidence type="ECO:0000255" key="1">
    <source>
        <dbReference type="HAMAP-Rule" id="MF_00294"/>
    </source>
</evidence>
<evidence type="ECO:0000305" key="2"/>